<evidence type="ECO:0000250" key="1">
    <source>
        <dbReference type="UniProtKB" id="Q9BYJ1"/>
    </source>
</evidence>
<evidence type="ECO:0000250" key="2">
    <source>
        <dbReference type="UniProtKB" id="Q9WV07"/>
    </source>
</evidence>
<evidence type="ECO:0000255" key="3">
    <source>
        <dbReference type="PROSITE-ProRule" id="PRU00152"/>
    </source>
</evidence>
<evidence type="ECO:0000255" key="4">
    <source>
        <dbReference type="PROSITE-ProRule" id="PRU00726"/>
    </source>
</evidence>
<evidence type="ECO:0000269" key="5">
    <source>
    </source>
</evidence>
<evidence type="ECO:0000305" key="6"/>
<evidence type="ECO:0000312" key="7">
    <source>
        <dbReference type="RGD" id="1306252"/>
    </source>
</evidence>
<comment type="function">
    <text evidence="1 2 5">Non-heme iron-containing lipoxygenase which is atypical in that it displays a prominent hydroperoxide isomerase activity and a reduced lipoxygenases activity. The hydroperoxide isomerase activity catalyzes the isomerization of hydroperoxides, derived from arachidonic and linoleic acid by ALOX12B, into hepoxilin-type epoxyalcohols and ketones. In presence of oxygen, oxygenates polyunsaturated fatty acids, including arachidonic acid, to produce fatty acid hydroperoxides. In the skin, acts downstream of ALOX12B on the linoleate moiety of esterified omega-hydroxyacyl-sphingosine (EOS) ceramides to produce an epoxy-ketone derivative, a crucial step in the conjugation of omega-hydroxyceramide to membrane proteins. Therefore plays a crucial role in the synthesis of corneocytes lipid envelope and the establishment of the skin barrier to water loss. In parallel, it may have a signaling function in barrier formation through the production of hepoxilins metabolites (By similarity). Also plays a role in adipocyte differentiation through hepoxilin A3 and hepoxilin B3 production which in turn activate PPARG (By similarity). Through the production of hepoxilins in the spinal cord, it may regulate inflammatory tactile allodynia (PubMed:23382512).</text>
</comment>
<comment type="catalytic activity">
    <reaction evidence="1">
        <text>a hydroperoxyeicosatetraenoate = a hydroxy-epoxy-eicosatetraenoate</text>
        <dbReference type="Rhea" id="RHEA:55560"/>
        <dbReference type="ChEBI" id="CHEBI:59720"/>
        <dbReference type="ChEBI" id="CHEBI:137328"/>
        <dbReference type="EC" id="5.4.4.7"/>
    </reaction>
    <physiologicalReaction direction="left-to-right" evidence="1">
        <dbReference type="Rhea" id="RHEA:55561"/>
    </physiologicalReaction>
</comment>
<comment type="catalytic activity">
    <reaction evidence="1">
        <text>a hydroperoxyeicosatetraenoate = an oxoeicosatetraenoate + H2O</text>
        <dbReference type="Rhea" id="RHEA:55556"/>
        <dbReference type="ChEBI" id="CHEBI:15377"/>
        <dbReference type="ChEBI" id="CHEBI:59720"/>
        <dbReference type="ChEBI" id="CHEBI:131859"/>
        <dbReference type="EC" id="4.2.1.152"/>
    </reaction>
    <physiologicalReaction direction="left-to-right" evidence="1">
        <dbReference type="Rhea" id="RHEA:55557"/>
    </physiologicalReaction>
</comment>
<comment type="catalytic activity">
    <reaction evidence="1">
        <text>(12R)-hydroperoxy-(5Z,8Z,10E,14Z)-eicosatetraenoate = (8R)-hydroxy-(11R,12R)-epoxy-(5Z,9E,14Z)-eicosatrienoate</text>
        <dbReference type="Rhea" id="RHEA:37939"/>
        <dbReference type="ChEBI" id="CHEBI:75230"/>
        <dbReference type="ChEBI" id="CHEBI:75232"/>
        <dbReference type="EC" id="5.4.4.7"/>
    </reaction>
    <physiologicalReaction direction="left-to-right" evidence="1">
        <dbReference type="Rhea" id="RHEA:37940"/>
    </physiologicalReaction>
</comment>
<comment type="catalytic activity">
    <reaction evidence="1">
        <text>(12S)-hydroperoxy-(5Z,8Z,10E,14Z)-eicosatetraenoate = (8R)-hydroxy-(11S,12S)-epoxy-(5Z,9E,14Z)-eicosatrienoate</text>
        <dbReference type="Rhea" id="RHEA:37955"/>
        <dbReference type="ChEBI" id="CHEBI:57444"/>
        <dbReference type="ChEBI" id="CHEBI:75233"/>
        <dbReference type="EC" id="5.4.4.7"/>
    </reaction>
    <physiologicalReaction direction="left-to-right" evidence="1">
        <dbReference type="Rhea" id="RHEA:37956"/>
    </physiologicalReaction>
</comment>
<comment type="catalytic activity">
    <reaction evidence="1">
        <text>(12S)-hydroperoxy-(5Z,8Z,10E,14Z)-eicosatetraenoate = (10R)-hydroxy-(11S,12S)-epoxy-(5Z,8Z,14Z)-eicosatrienoate</text>
        <dbReference type="Rhea" id="RHEA:37951"/>
        <dbReference type="ChEBI" id="CHEBI:57444"/>
        <dbReference type="ChEBI" id="CHEBI:75234"/>
        <dbReference type="EC" id="5.4.4.7"/>
    </reaction>
    <physiologicalReaction direction="left-to-right" evidence="1">
        <dbReference type="Rhea" id="RHEA:37952"/>
    </physiologicalReaction>
</comment>
<comment type="catalytic activity">
    <reaction evidence="1">
        <text>(15S)-hydroperoxy-(5Z,8Z,11Z,13E)-eicosatetraenoate = (13R)-hydroxy-(14S,15S)-epoxy-(5Z,8Z,11Z)-eicosatrienoate</text>
        <dbReference type="Rhea" id="RHEA:37959"/>
        <dbReference type="ChEBI" id="CHEBI:57446"/>
        <dbReference type="ChEBI" id="CHEBI:75235"/>
        <dbReference type="EC" id="5.4.4.7"/>
    </reaction>
    <physiologicalReaction direction="left-to-right" evidence="1">
        <dbReference type="Rhea" id="RHEA:37960"/>
    </physiologicalReaction>
</comment>
<comment type="catalytic activity">
    <reaction evidence="1">
        <text>(5S)-hydroperoxy-(6E,8Z,11Z,14Z)-eicosatetraenoate = 7R-hydroxy-5S,6S-epoxy-(8Z,11Z,14Z)-eicosatrienoate</text>
        <dbReference type="Rhea" id="RHEA:41251"/>
        <dbReference type="ChEBI" id="CHEBI:57450"/>
        <dbReference type="ChEBI" id="CHEBI:77919"/>
    </reaction>
    <physiologicalReaction direction="left-to-right" evidence="1">
        <dbReference type="Rhea" id="RHEA:41252"/>
    </physiologicalReaction>
</comment>
<comment type="catalytic activity">
    <reaction evidence="1">
        <text>(13S)-hydroperoxy-(9Z,11E)-octadecadienoate = 11-hydroxy-(12S,13S)-epoxy-(9Z)-octadecenoate</text>
        <dbReference type="Rhea" id="RHEA:50212"/>
        <dbReference type="ChEBI" id="CHEBI:57466"/>
        <dbReference type="ChEBI" id="CHEBI:132064"/>
    </reaction>
    <physiologicalReaction direction="left-to-right" evidence="1">
        <dbReference type="Rhea" id="RHEA:50213"/>
    </physiologicalReaction>
</comment>
<comment type="catalytic activity">
    <reaction evidence="1">
        <text>N-[omega-(9R)-hydroperoxy-(10E,12Z)-octadecadienoyloxy]acyl-beta-D-glucosyl-(1&lt;-&gt;1)-octadecasphing-4E-enine = a N-[omega-(9R,10R)-epoxy-(13R)-hydroxy-(11E)-octadecenoyloxy]acyl-beta-D-glucosyl-(1&lt;-&gt;1)-sphing-4E-enine</text>
        <dbReference type="Rhea" id="RHEA:40503"/>
        <dbReference type="ChEBI" id="CHEBI:134624"/>
        <dbReference type="ChEBI" id="CHEBI:134626"/>
    </reaction>
    <physiologicalReaction direction="left-to-right" evidence="1">
        <dbReference type="Rhea" id="RHEA:40504"/>
    </physiologicalReaction>
</comment>
<comment type="catalytic activity">
    <reaction evidence="1">
        <text>a N-[omega-(9R)-hydroperoxy-(10E,12Z)-octadecadienoyloxy]-acylsphin-4E-enine = a N-[omega-(9R,10R)-epoxy-(13R)-hydroxy-(11E)-octadecenoyloxy]-acylsphing-4E-enine</text>
        <dbReference type="Rhea" id="RHEA:41243"/>
        <dbReference type="ChEBI" id="CHEBI:77889"/>
        <dbReference type="ChEBI" id="CHEBI:77891"/>
    </reaction>
    <physiologicalReaction direction="left-to-right" evidence="1">
        <dbReference type="Rhea" id="RHEA:41244"/>
    </physiologicalReaction>
</comment>
<comment type="catalytic activity">
    <reaction evidence="1">
        <text>(12R)-hydroperoxy-(5Z,8Z,10E,14Z)-eicosatetraenoate = 12-oxo-(5Z,8Z,10E,14Z)-eicosatetraenoate + H2O</text>
        <dbReference type="Rhea" id="RHEA:37943"/>
        <dbReference type="ChEBI" id="CHEBI:15377"/>
        <dbReference type="ChEBI" id="CHEBI:75230"/>
        <dbReference type="ChEBI" id="CHEBI:75231"/>
        <dbReference type="EC" id="4.2.1.152"/>
    </reaction>
    <physiologicalReaction direction="left-to-right" evidence="1">
        <dbReference type="Rhea" id="RHEA:37944"/>
    </physiologicalReaction>
</comment>
<comment type="catalytic activity">
    <reaction evidence="1">
        <text>(12S)-hydroperoxy-(5Z,8Z,10E,14Z)-eicosatetraenoate = 12-oxo-(5Z,8Z,10E,14Z)-eicosatetraenoate + H2O</text>
        <dbReference type="Rhea" id="RHEA:37947"/>
        <dbReference type="ChEBI" id="CHEBI:15377"/>
        <dbReference type="ChEBI" id="CHEBI:57444"/>
        <dbReference type="ChEBI" id="CHEBI:75231"/>
        <dbReference type="EC" id="4.2.1.152"/>
    </reaction>
    <physiologicalReaction direction="left-to-right" evidence="1">
        <dbReference type="Rhea" id="RHEA:37948"/>
    </physiologicalReaction>
</comment>
<comment type="catalytic activity">
    <reaction evidence="1">
        <text>(15S)-hydroperoxy-(5Z,8Z,11Z,13E)-eicosatetraenoate = 15-oxo-(5Z,8Z,11Z,13E)-eicosatetraenoate + H2O</text>
        <dbReference type="Rhea" id="RHEA:48636"/>
        <dbReference type="ChEBI" id="CHEBI:15377"/>
        <dbReference type="ChEBI" id="CHEBI:57410"/>
        <dbReference type="ChEBI" id="CHEBI:57446"/>
    </reaction>
    <physiologicalReaction direction="left-to-right" evidence="1">
        <dbReference type="Rhea" id="RHEA:48637"/>
    </physiologicalReaction>
</comment>
<comment type="catalytic activity">
    <reaction evidence="1">
        <text>(13S)-hydroperoxy-(9Z,11E)-octadecadienoate = 13-oxo-(9Z,11E)-octadecadienoate + H2O</text>
        <dbReference type="Rhea" id="RHEA:48716"/>
        <dbReference type="ChEBI" id="CHEBI:15377"/>
        <dbReference type="ChEBI" id="CHEBI:57466"/>
        <dbReference type="ChEBI" id="CHEBI:90781"/>
    </reaction>
    <physiologicalReaction direction="left-to-right" evidence="1">
        <dbReference type="Rhea" id="RHEA:48717"/>
    </physiologicalReaction>
</comment>
<comment type="catalytic activity">
    <reaction evidence="2">
        <text>(8S)-hydroperoxy-(5Z,9E,11Z,14Z)-eicosatetraenoate = (10R)-hydroxy-(8S,9S)-epoxy-(5Z,11Z,14Z)-eicosatrienoate</text>
        <dbReference type="Rhea" id="RHEA:37931"/>
        <dbReference type="ChEBI" id="CHEBI:75322"/>
        <dbReference type="ChEBI" id="CHEBI:75327"/>
        <dbReference type="EC" id="5.4.4.7"/>
    </reaction>
    <physiologicalReaction direction="left-to-right" evidence="2">
        <dbReference type="Rhea" id="RHEA:37932"/>
    </physiologicalReaction>
</comment>
<comment type="catalytic activity">
    <reaction evidence="2">
        <text>(8R)-hydroperoxy-(5Z,9E,11Z,14Z)-eicosatetraenoate = 8-oxo-(5Z,9E,11Z,14Z)-eicosatetraenoate + H2O</text>
        <dbReference type="Rhea" id="RHEA:37935"/>
        <dbReference type="ChEBI" id="CHEBI:15377"/>
        <dbReference type="ChEBI" id="CHEBI:57447"/>
        <dbReference type="ChEBI" id="CHEBI:75326"/>
        <dbReference type="EC" id="4.2.1.152"/>
    </reaction>
    <physiologicalReaction direction="left-to-right" evidence="2">
        <dbReference type="Rhea" id="RHEA:37936"/>
    </physiologicalReaction>
</comment>
<comment type="catalytic activity">
    <reaction evidence="2">
        <text>(8S)-hydroperoxy-(5Z,9E,11Z,14Z)-eicosatetraenoate = 8-oxo-(5Z,9E,11Z,14Z)-eicosatetraenoate + H2O</text>
        <dbReference type="Rhea" id="RHEA:37927"/>
        <dbReference type="ChEBI" id="CHEBI:15377"/>
        <dbReference type="ChEBI" id="CHEBI:75322"/>
        <dbReference type="ChEBI" id="CHEBI:75326"/>
        <dbReference type="EC" id="4.2.1.152"/>
    </reaction>
    <physiologicalReaction direction="left-to-right" evidence="2">
        <dbReference type="Rhea" id="RHEA:37928"/>
    </physiologicalReaction>
</comment>
<comment type="cofactor">
    <cofactor evidence="4">
        <name>Fe cation</name>
        <dbReference type="ChEBI" id="CHEBI:24875"/>
    </cofactor>
    <text evidence="4">Binds 1 Fe cation per subunit.</text>
</comment>
<comment type="pathway">
    <text evidence="1">Lipid metabolism; hydroperoxy eicosatetraenoic acid biosynthesis.</text>
</comment>
<comment type="pathway">
    <text evidence="1">Lipid metabolism; sphingolipid metabolism.</text>
</comment>
<comment type="subcellular location">
    <subcellularLocation>
        <location evidence="4">Cytoplasm</location>
    </subcellularLocation>
</comment>
<comment type="similarity">
    <text evidence="6">Belongs to the lipoxygenase family.</text>
</comment>
<comment type="online information" name="Protein Spotlight">
    <link uri="https://www.proteinspotlight.org/back_issues/153/"/>
    <text>about water - Issue 153 of September 2013</text>
</comment>
<organism>
    <name type="scientific">Rattus norvegicus</name>
    <name type="common">Rat</name>
    <dbReference type="NCBI Taxonomy" id="10116"/>
    <lineage>
        <taxon>Eukaryota</taxon>
        <taxon>Metazoa</taxon>
        <taxon>Chordata</taxon>
        <taxon>Craniata</taxon>
        <taxon>Vertebrata</taxon>
        <taxon>Euteleostomi</taxon>
        <taxon>Mammalia</taxon>
        <taxon>Eutheria</taxon>
        <taxon>Euarchontoglires</taxon>
        <taxon>Glires</taxon>
        <taxon>Rodentia</taxon>
        <taxon>Myomorpha</taxon>
        <taxon>Muroidea</taxon>
        <taxon>Muridae</taxon>
        <taxon>Murinae</taxon>
        <taxon>Rattus</taxon>
    </lineage>
</organism>
<reference key="1">
    <citation type="journal article" date="2004" name="Nature">
        <title>Genome sequence of the Brown Norway rat yields insights into mammalian evolution.</title>
        <authorList>
            <person name="Gibbs R.A."/>
            <person name="Weinstock G.M."/>
            <person name="Metzker M.L."/>
            <person name="Muzny D.M."/>
            <person name="Sodergren E.J."/>
            <person name="Scherer S."/>
            <person name="Scott G."/>
            <person name="Steffen D."/>
            <person name="Worley K.C."/>
            <person name="Burch P.E."/>
            <person name="Okwuonu G."/>
            <person name="Hines S."/>
            <person name="Lewis L."/>
            <person name="Deramo C."/>
            <person name="Delgado O."/>
            <person name="Dugan-Rocha S."/>
            <person name="Miner G."/>
            <person name="Morgan M."/>
            <person name="Hawes A."/>
            <person name="Gill R."/>
            <person name="Holt R.A."/>
            <person name="Adams M.D."/>
            <person name="Amanatides P.G."/>
            <person name="Baden-Tillson H."/>
            <person name="Barnstead M."/>
            <person name="Chin S."/>
            <person name="Evans C.A."/>
            <person name="Ferriera S."/>
            <person name="Fosler C."/>
            <person name="Glodek A."/>
            <person name="Gu Z."/>
            <person name="Jennings D."/>
            <person name="Kraft C.L."/>
            <person name="Nguyen T."/>
            <person name="Pfannkoch C.M."/>
            <person name="Sitter C."/>
            <person name="Sutton G.G."/>
            <person name="Venter J.C."/>
            <person name="Woodage T."/>
            <person name="Smith D."/>
            <person name="Lee H.-M."/>
            <person name="Gustafson E."/>
            <person name="Cahill P."/>
            <person name="Kana A."/>
            <person name="Doucette-Stamm L."/>
            <person name="Weinstock K."/>
            <person name="Fechtel K."/>
            <person name="Weiss R.B."/>
            <person name="Dunn D.M."/>
            <person name="Green E.D."/>
            <person name="Blakesley R.W."/>
            <person name="Bouffard G.G."/>
            <person name="De Jong P.J."/>
            <person name="Osoegawa K."/>
            <person name="Zhu B."/>
            <person name="Marra M."/>
            <person name="Schein J."/>
            <person name="Bosdet I."/>
            <person name="Fjell C."/>
            <person name="Jones S."/>
            <person name="Krzywinski M."/>
            <person name="Mathewson C."/>
            <person name="Siddiqui A."/>
            <person name="Wye N."/>
            <person name="McPherson J."/>
            <person name="Zhao S."/>
            <person name="Fraser C.M."/>
            <person name="Shetty J."/>
            <person name="Shatsman S."/>
            <person name="Geer K."/>
            <person name="Chen Y."/>
            <person name="Abramzon S."/>
            <person name="Nierman W.C."/>
            <person name="Havlak P.H."/>
            <person name="Chen R."/>
            <person name="Durbin K.J."/>
            <person name="Egan A."/>
            <person name="Ren Y."/>
            <person name="Song X.-Z."/>
            <person name="Li B."/>
            <person name="Liu Y."/>
            <person name="Qin X."/>
            <person name="Cawley S."/>
            <person name="Cooney A.J."/>
            <person name="D'Souza L.M."/>
            <person name="Martin K."/>
            <person name="Wu J.Q."/>
            <person name="Gonzalez-Garay M.L."/>
            <person name="Jackson A.R."/>
            <person name="Kalafus K.J."/>
            <person name="McLeod M.P."/>
            <person name="Milosavljevic A."/>
            <person name="Virk D."/>
            <person name="Volkov A."/>
            <person name="Wheeler D.A."/>
            <person name="Zhang Z."/>
            <person name="Bailey J.A."/>
            <person name="Eichler E.E."/>
            <person name="Tuzun E."/>
            <person name="Birney E."/>
            <person name="Mongin E."/>
            <person name="Ureta-Vidal A."/>
            <person name="Woodwark C."/>
            <person name="Zdobnov E."/>
            <person name="Bork P."/>
            <person name="Suyama M."/>
            <person name="Torrents D."/>
            <person name="Alexandersson M."/>
            <person name="Trask B.J."/>
            <person name="Young J.M."/>
            <person name="Huang H."/>
            <person name="Wang H."/>
            <person name="Xing H."/>
            <person name="Daniels S."/>
            <person name="Gietzen D."/>
            <person name="Schmidt J."/>
            <person name="Stevens K."/>
            <person name="Vitt U."/>
            <person name="Wingrove J."/>
            <person name="Camara F."/>
            <person name="Mar Alba M."/>
            <person name="Abril J.F."/>
            <person name="Guigo R."/>
            <person name="Smit A."/>
            <person name="Dubchak I."/>
            <person name="Rubin E.M."/>
            <person name="Couronne O."/>
            <person name="Poliakov A."/>
            <person name="Huebner N."/>
            <person name="Ganten D."/>
            <person name="Goesele C."/>
            <person name="Hummel O."/>
            <person name="Kreitler T."/>
            <person name="Lee Y.-A."/>
            <person name="Monti J."/>
            <person name="Schulz H."/>
            <person name="Zimdahl H."/>
            <person name="Himmelbauer H."/>
            <person name="Lehrach H."/>
            <person name="Jacob H.J."/>
            <person name="Bromberg S."/>
            <person name="Gullings-Handley J."/>
            <person name="Jensen-Seaman M.I."/>
            <person name="Kwitek A.E."/>
            <person name="Lazar J."/>
            <person name="Pasko D."/>
            <person name="Tonellato P.J."/>
            <person name="Twigger S."/>
            <person name="Ponting C.P."/>
            <person name="Duarte J.M."/>
            <person name="Rice S."/>
            <person name="Goodstadt L."/>
            <person name="Beatson S.A."/>
            <person name="Emes R.D."/>
            <person name="Winter E.E."/>
            <person name="Webber C."/>
            <person name="Brandt P."/>
            <person name="Nyakatura G."/>
            <person name="Adetobi M."/>
            <person name="Chiaromonte F."/>
            <person name="Elnitski L."/>
            <person name="Eswara P."/>
            <person name="Hardison R.C."/>
            <person name="Hou M."/>
            <person name="Kolbe D."/>
            <person name="Makova K."/>
            <person name="Miller W."/>
            <person name="Nekrutenko A."/>
            <person name="Riemer C."/>
            <person name="Schwartz S."/>
            <person name="Taylor J."/>
            <person name="Yang S."/>
            <person name="Zhang Y."/>
            <person name="Lindpaintner K."/>
            <person name="Andrews T.D."/>
            <person name="Caccamo M."/>
            <person name="Clamp M."/>
            <person name="Clarke L."/>
            <person name="Curwen V."/>
            <person name="Durbin R.M."/>
            <person name="Eyras E."/>
            <person name="Searle S.M."/>
            <person name="Cooper G.M."/>
            <person name="Batzoglou S."/>
            <person name="Brudno M."/>
            <person name="Sidow A."/>
            <person name="Stone E.A."/>
            <person name="Payseur B.A."/>
            <person name="Bourque G."/>
            <person name="Lopez-Otin C."/>
            <person name="Puente X.S."/>
            <person name="Chakrabarti K."/>
            <person name="Chatterji S."/>
            <person name="Dewey C."/>
            <person name="Pachter L."/>
            <person name="Bray N."/>
            <person name="Yap V.B."/>
            <person name="Caspi A."/>
            <person name="Tesler G."/>
            <person name="Pevzner P.A."/>
            <person name="Haussler D."/>
            <person name="Roskin K.M."/>
            <person name="Baertsch R."/>
            <person name="Clawson H."/>
            <person name="Furey T.S."/>
            <person name="Hinrichs A.S."/>
            <person name="Karolchik D."/>
            <person name="Kent W.J."/>
            <person name="Rosenbloom K.R."/>
            <person name="Trumbower H."/>
            <person name="Weirauch M."/>
            <person name="Cooper D.N."/>
            <person name="Stenson P.D."/>
            <person name="Ma B."/>
            <person name="Brent M."/>
            <person name="Arumugam M."/>
            <person name="Shteynberg D."/>
            <person name="Copley R.R."/>
            <person name="Taylor M.S."/>
            <person name="Riethman H."/>
            <person name="Mudunuri U."/>
            <person name="Peterson J."/>
            <person name="Guyer M."/>
            <person name="Felsenfeld A."/>
            <person name="Old S."/>
            <person name="Mockrin S."/>
            <person name="Collins F.S."/>
        </authorList>
    </citation>
    <scope>NUCLEOTIDE SEQUENCE [LARGE SCALE GENOMIC DNA]</scope>
    <source>
        <strain>Brown Norway</strain>
    </source>
</reference>
<reference key="2">
    <citation type="submission" date="2005-07" db="EMBL/GenBank/DDBJ databases">
        <authorList>
            <person name="Mural R.J."/>
            <person name="Adams M.D."/>
            <person name="Myers E.W."/>
            <person name="Smith H.O."/>
            <person name="Venter J.C."/>
        </authorList>
    </citation>
    <scope>NUCLEOTIDE SEQUENCE [LARGE SCALE GENOMIC DNA]</scope>
    <source>
        <strain>Brown Norway</strain>
    </source>
</reference>
<reference key="3">
    <citation type="journal article" date="2013" name="FASEB J.">
        <title>Systematic analysis of rat 12/15-lipoxygenase enzymes reveals critical role for spinal eLOX3 hepoxilin synthase activity in inflammatory hyperalgesia.</title>
        <authorList>
            <person name="Gregus A.M."/>
            <person name="Dumlao D.S."/>
            <person name="Wei S.C."/>
            <person name="Norris P.C."/>
            <person name="Catella L.C."/>
            <person name="Meyerstein F.G."/>
            <person name="Buczynski M.W."/>
            <person name="Steinauer J.J."/>
            <person name="Fitzsimmons B.L."/>
            <person name="Yaksh T.L."/>
            <person name="Dennis E.A."/>
        </authorList>
    </citation>
    <scope>FUNCTION IN ALGESIA</scope>
</reference>
<sequence length="711" mass="80440">MAVYRLCVTTGSYLKAGTLDNIYATLVGTCGESPKQKLDRVGRDFATGSVQKYKVRCASELGEILLLRLHKERFAFFCKDPWYCSRICVTTPDGSVVHFPCYQWIDGYCTVELRPGTARTICQDALPLLLDHRKRELQARQECYRWKIYAPGFPRMVDVSSFEEMESDKKFALTKTAPCADQDDNSGNRYLPGFPMKVDIPSLLHMEPNIRYSATKTASLIFNALPASLGMKIRGLLDRKGSWKRLDDIRNIFWCHKTFTSEYVTEHWCEDSFFGYQYLNGVNPIMLHCLSSLPSKLPVTNDMVAPLLGPGTCLQTELERGHIFLADYWILAEAPVHCLNGRQQYVTAPLCLLWLNPQGVLLPLAIQLSQIPGPESPIFLPTDCELDWLLAKTWVRNSEFLVHENNTHFLCTHLLCEAFSMATLRQLPLCHPVYKLLLPHTRYTLQVNTIARATLLNPDGLVDKVTSIGRRGLIYLMSTGLAHFTYTDFCLPDSLRARGVLTIPNYHYRDDGLKIWAAIERFVSEIVSYYYPNDACVQQDSELQAWVGEIFAQAFLGRESSGFPSRLCTPGELVKYLTAIIFNCSAQHAAVNSGQHDFGAWMPNAPSSMRQPPPQTKGNTTMESYLETLPEVNTTCSNLLLFWLVSQEPKDQRPLGTYPDEHFTEEAPRQSIAAFQKCLAQISKDIRARNESLALPYAYLDPPLIENSVSI</sequence>
<name>LOXE3_RAT</name>
<feature type="chain" id="PRO_0000423419" description="Hydroperoxide isomerase ALOXE3">
    <location>
        <begin position="1"/>
        <end position="711"/>
    </location>
</feature>
<feature type="domain" description="PLAT" evidence="3">
    <location>
        <begin position="2"/>
        <end position="119"/>
    </location>
</feature>
<feature type="domain" description="Lipoxygenase" evidence="4">
    <location>
        <begin position="119"/>
        <end position="711"/>
    </location>
</feature>
<feature type="binding site" evidence="4">
    <location>
        <position position="408"/>
    </location>
    <ligand>
        <name>Fe cation</name>
        <dbReference type="ChEBI" id="CHEBI:24875"/>
        <note>catalytic</note>
    </ligand>
</feature>
<feature type="binding site" evidence="4">
    <location>
        <position position="413"/>
    </location>
    <ligand>
        <name>Fe cation</name>
        <dbReference type="ChEBI" id="CHEBI:24875"/>
        <note>catalytic</note>
    </ligand>
</feature>
<feature type="binding site" evidence="4">
    <location>
        <position position="588"/>
    </location>
    <ligand>
        <name>Fe cation</name>
        <dbReference type="ChEBI" id="CHEBI:24875"/>
        <note>catalytic</note>
    </ligand>
</feature>
<feature type="binding site" evidence="4">
    <location>
        <position position="592"/>
    </location>
    <ligand>
        <name>Fe cation</name>
        <dbReference type="ChEBI" id="CHEBI:24875"/>
        <note>catalytic</note>
    </ligand>
</feature>
<feature type="binding site" evidence="4">
    <location>
        <position position="711"/>
    </location>
    <ligand>
        <name>Fe cation</name>
        <dbReference type="ChEBI" id="CHEBI:24875"/>
        <note>catalytic</note>
    </ligand>
</feature>
<protein>
    <recommendedName>
        <fullName evidence="6">Hydroperoxide isomerase ALOXE3</fullName>
    </recommendedName>
    <alternativeName>
        <fullName evidence="2">Epidermis-type lipoxygenase 3</fullName>
        <shortName>Epidermal LOX-3</shortName>
        <shortName evidence="2">e-LOX-3</shortName>
        <shortName>eLOX-3</shortName>
    </alternativeName>
    <alternativeName>
        <fullName evidence="6">Hydroperoxy dehydratase ALOXE3</fullName>
    </alternativeName>
    <alternativeName>
        <fullName>Hydroperoxy icosatetraenoate dehydratase</fullName>
        <ecNumber evidence="2">4.2.1.152</ecNumber>
    </alternativeName>
    <alternativeName>
        <fullName>Hydroperoxy icosatetraenoate isomerase</fullName>
        <ecNumber evidence="2">5.4.4.7</ecNumber>
    </alternativeName>
</protein>
<proteinExistence type="evidence at protein level"/>
<gene>
    <name evidence="7" type="primary">Aloxe3</name>
</gene>
<accession>D3ZKX9</accession>
<dbReference type="EC" id="4.2.1.152" evidence="2"/>
<dbReference type="EC" id="5.4.4.7" evidence="2"/>
<dbReference type="EMBL" id="AABR06064371">
    <property type="status" value="NOT_ANNOTATED_CDS"/>
    <property type="molecule type" value="Genomic_DNA"/>
</dbReference>
<dbReference type="EMBL" id="CH473948">
    <property type="protein sequence ID" value="EDM04845.1"/>
    <property type="molecule type" value="Genomic_DNA"/>
</dbReference>
<dbReference type="RefSeq" id="NP_001099263.1">
    <property type="nucleotide sequence ID" value="NM_001105793.1"/>
</dbReference>
<dbReference type="SMR" id="D3ZKX9"/>
<dbReference type="FunCoup" id="D3ZKX9">
    <property type="interactions" value="46"/>
</dbReference>
<dbReference type="STRING" id="10116.ENSRNOP00000010141"/>
<dbReference type="PhosphoSitePlus" id="D3ZKX9"/>
<dbReference type="PaxDb" id="10116-ENSRNOP00000010141"/>
<dbReference type="Ensembl" id="ENSRNOT00000010141.8">
    <property type="protein sequence ID" value="ENSRNOP00000010141.4"/>
    <property type="gene ID" value="ENSRNOG00000007454.8"/>
</dbReference>
<dbReference type="GeneID" id="287424"/>
<dbReference type="KEGG" id="rno:287424"/>
<dbReference type="UCSC" id="RGD:1306252">
    <property type="organism name" value="rat"/>
</dbReference>
<dbReference type="AGR" id="RGD:1306252"/>
<dbReference type="CTD" id="59344"/>
<dbReference type="RGD" id="1306252">
    <property type="gene designation" value="Aloxe3"/>
</dbReference>
<dbReference type="eggNOG" id="ENOG502QQSP">
    <property type="taxonomic scope" value="Eukaryota"/>
</dbReference>
<dbReference type="GeneTree" id="ENSGT00940000156796"/>
<dbReference type="HOGENOM" id="CLU_004282_3_3_1"/>
<dbReference type="InParanoid" id="D3ZKX9"/>
<dbReference type="OMA" id="DSPGNRY"/>
<dbReference type="OrthoDB" id="407298at2759"/>
<dbReference type="PhylomeDB" id="D3ZKX9"/>
<dbReference type="TreeFam" id="TF105320"/>
<dbReference type="Reactome" id="R-RNO-2142712">
    <property type="pathway name" value="Synthesis of 12-eicosatetraenoic acid derivatives"/>
</dbReference>
<dbReference type="UniPathway" id="UPA00222"/>
<dbReference type="UniPathway" id="UPA00881"/>
<dbReference type="PRO" id="PR:D3ZKX9"/>
<dbReference type="Proteomes" id="UP000002494">
    <property type="component" value="Chromosome 10"/>
</dbReference>
<dbReference type="Proteomes" id="UP000234681">
    <property type="component" value="Chromosome 10"/>
</dbReference>
<dbReference type="Bgee" id="ENSRNOG00000007454">
    <property type="expression patterns" value="Expressed in esophagus and 11 other cell types or tissues"/>
</dbReference>
<dbReference type="GO" id="GO:0005737">
    <property type="term" value="C:cytoplasm"/>
    <property type="evidence" value="ECO:0007669"/>
    <property type="project" value="UniProtKB-SubCell"/>
</dbReference>
<dbReference type="GO" id="GO:0016020">
    <property type="term" value="C:membrane"/>
    <property type="evidence" value="ECO:0007669"/>
    <property type="project" value="GOC"/>
</dbReference>
<dbReference type="GO" id="GO:0106256">
    <property type="term" value="F:hydroperoxy icosatetraenoate dehydratase activity"/>
    <property type="evidence" value="ECO:0007669"/>
    <property type="project" value="UniProtKB-EC"/>
</dbReference>
<dbReference type="GO" id="GO:0106255">
    <property type="term" value="F:hydroperoxy icosatetraenoate isomerase activity"/>
    <property type="evidence" value="ECO:0000250"/>
    <property type="project" value="UniProtKB"/>
</dbReference>
<dbReference type="GO" id="GO:0050486">
    <property type="term" value="F:intramolecular hydroxytransferase activity"/>
    <property type="evidence" value="ECO:0000250"/>
    <property type="project" value="UniProtKB"/>
</dbReference>
<dbReference type="GO" id="GO:0005506">
    <property type="term" value="F:iron ion binding"/>
    <property type="evidence" value="ECO:0007669"/>
    <property type="project" value="InterPro"/>
</dbReference>
<dbReference type="GO" id="GO:0016702">
    <property type="term" value="F:oxidoreductase activity, acting on single donors with incorporation of molecular oxygen, incorporation of two atoms of oxygen"/>
    <property type="evidence" value="ECO:0000250"/>
    <property type="project" value="UniProtKB"/>
</dbReference>
<dbReference type="GO" id="GO:0019369">
    <property type="term" value="P:arachidonate metabolic process"/>
    <property type="evidence" value="ECO:0000314"/>
    <property type="project" value="UniProtKB"/>
</dbReference>
<dbReference type="GO" id="GO:0046513">
    <property type="term" value="P:ceramide biosynthetic process"/>
    <property type="evidence" value="ECO:0000250"/>
    <property type="project" value="UniProtKB"/>
</dbReference>
<dbReference type="GO" id="GO:0061436">
    <property type="term" value="P:establishment of skin barrier"/>
    <property type="evidence" value="ECO:0000250"/>
    <property type="project" value="UniProtKB"/>
</dbReference>
<dbReference type="GO" id="GO:0045444">
    <property type="term" value="P:fat cell differentiation"/>
    <property type="evidence" value="ECO:0000250"/>
    <property type="project" value="UniProtKB"/>
</dbReference>
<dbReference type="GO" id="GO:0051122">
    <property type="term" value="P:hepoxilin biosynthetic process"/>
    <property type="evidence" value="ECO:0000314"/>
    <property type="project" value="UniProtKB"/>
</dbReference>
<dbReference type="GO" id="GO:0043651">
    <property type="term" value="P:linoleic acid metabolic process"/>
    <property type="evidence" value="ECO:0000250"/>
    <property type="project" value="UniProtKB"/>
</dbReference>
<dbReference type="GO" id="GO:0034440">
    <property type="term" value="P:lipid oxidation"/>
    <property type="evidence" value="ECO:0007669"/>
    <property type="project" value="InterPro"/>
</dbReference>
<dbReference type="GO" id="GO:0019372">
    <property type="term" value="P:lipoxygenase pathway"/>
    <property type="evidence" value="ECO:0000250"/>
    <property type="project" value="UniProtKB"/>
</dbReference>
<dbReference type="GO" id="GO:0035357">
    <property type="term" value="P:peroxisome proliferator activated receptor signaling pathway"/>
    <property type="evidence" value="ECO:0000250"/>
    <property type="project" value="UniProtKB"/>
</dbReference>
<dbReference type="GO" id="GO:0019233">
    <property type="term" value="P:sensory perception of pain"/>
    <property type="evidence" value="ECO:0000315"/>
    <property type="project" value="UniProtKB"/>
</dbReference>
<dbReference type="GO" id="GO:0006665">
    <property type="term" value="P:sphingolipid metabolic process"/>
    <property type="evidence" value="ECO:0000250"/>
    <property type="project" value="UniProtKB"/>
</dbReference>
<dbReference type="CDD" id="cd01753">
    <property type="entry name" value="PLAT_LOX"/>
    <property type="match status" value="1"/>
</dbReference>
<dbReference type="FunFam" id="3.10.450.60:FF:000001">
    <property type="entry name" value="arachidonate 12-lipoxygenase, 12R-type"/>
    <property type="match status" value="1"/>
</dbReference>
<dbReference type="FunFam" id="1.20.245.10:FF:000001">
    <property type="entry name" value="Arachidonate 5-lipoxygenase a"/>
    <property type="match status" value="1"/>
</dbReference>
<dbReference type="FunFam" id="2.60.60.20:FF:000002">
    <property type="entry name" value="Arachidonate 5-lipoxygenase a"/>
    <property type="match status" value="1"/>
</dbReference>
<dbReference type="Gene3D" id="3.10.450.60">
    <property type="match status" value="1"/>
</dbReference>
<dbReference type="Gene3D" id="1.20.245.10">
    <property type="entry name" value="Lipoxygenase-1, Domain 5"/>
    <property type="match status" value="2"/>
</dbReference>
<dbReference type="Gene3D" id="2.60.60.20">
    <property type="entry name" value="PLAT/LH2 domain"/>
    <property type="match status" value="1"/>
</dbReference>
<dbReference type="InterPro" id="IPR000907">
    <property type="entry name" value="LipOase"/>
</dbReference>
<dbReference type="InterPro" id="IPR013819">
    <property type="entry name" value="LipOase_C"/>
</dbReference>
<dbReference type="InterPro" id="IPR036226">
    <property type="entry name" value="LipOase_C_sf"/>
</dbReference>
<dbReference type="InterPro" id="IPR020834">
    <property type="entry name" value="LipOase_CS"/>
</dbReference>
<dbReference type="InterPro" id="IPR020833">
    <property type="entry name" value="LipOase_Fe_BS"/>
</dbReference>
<dbReference type="InterPro" id="IPR001885">
    <property type="entry name" value="LipOase_mml"/>
</dbReference>
<dbReference type="InterPro" id="IPR001024">
    <property type="entry name" value="PLAT/LH2_dom"/>
</dbReference>
<dbReference type="InterPro" id="IPR036392">
    <property type="entry name" value="PLAT/LH2_dom_sf"/>
</dbReference>
<dbReference type="InterPro" id="IPR042062">
    <property type="entry name" value="PLAT_LOX_verte"/>
</dbReference>
<dbReference type="PANTHER" id="PTHR11771">
    <property type="entry name" value="LIPOXYGENASE"/>
    <property type="match status" value="1"/>
</dbReference>
<dbReference type="Pfam" id="PF00305">
    <property type="entry name" value="Lipoxygenase"/>
    <property type="match status" value="1"/>
</dbReference>
<dbReference type="Pfam" id="PF01477">
    <property type="entry name" value="PLAT"/>
    <property type="match status" value="1"/>
</dbReference>
<dbReference type="PRINTS" id="PR00087">
    <property type="entry name" value="LIPOXYGENASE"/>
</dbReference>
<dbReference type="PRINTS" id="PR00467">
    <property type="entry name" value="MAMLPOXGNASE"/>
</dbReference>
<dbReference type="SMART" id="SM00308">
    <property type="entry name" value="LH2"/>
    <property type="match status" value="1"/>
</dbReference>
<dbReference type="SUPFAM" id="SSF49723">
    <property type="entry name" value="Lipase/lipooxygenase domain (PLAT/LH2 domain)"/>
    <property type="match status" value="1"/>
</dbReference>
<dbReference type="SUPFAM" id="SSF48484">
    <property type="entry name" value="Lipoxigenase"/>
    <property type="match status" value="1"/>
</dbReference>
<dbReference type="PROSITE" id="PS00711">
    <property type="entry name" value="LIPOXYGENASE_1"/>
    <property type="match status" value="1"/>
</dbReference>
<dbReference type="PROSITE" id="PS00081">
    <property type="entry name" value="LIPOXYGENASE_2"/>
    <property type="match status" value="1"/>
</dbReference>
<dbReference type="PROSITE" id="PS51393">
    <property type="entry name" value="LIPOXYGENASE_3"/>
    <property type="match status" value="1"/>
</dbReference>
<dbReference type="PROSITE" id="PS50095">
    <property type="entry name" value="PLAT"/>
    <property type="match status" value="1"/>
</dbReference>
<keyword id="KW-0963">Cytoplasm</keyword>
<keyword id="KW-0223">Dioxygenase</keyword>
<keyword id="KW-0276">Fatty acid metabolism</keyword>
<keyword id="KW-0408">Iron</keyword>
<keyword id="KW-0413">Isomerase</keyword>
<keyword id="KW-0443">Lipid metabolism</keyword>
<keyword id="KW-0456">Lyase</keyword>
<keyword id="KW-0479">Metal-binding</keyword>
<keyword id="KW-0560">Oxidoreductase</keyword>
<keyword id="KW-1185">Reference proteome</keyword>